<name>RIMM_CHLAA</name>
<gene>
    <name evidence="1" type="primary">rimM</name>
    <name type="ordered locus">Caur_2055</name>
</gene>
<proteinExistence type="inferred from homology"/>
<protein>
    <recommendedName>
        <fullName evidence="1">Ribosome maturation factor RimM</fullName>
    </recommendedName>
</protein>
<sequence>MLWVVMDDLLYIGALGAPFGVRGQIRLHSISSHPEHLIRHLRTVFIGPKRVPHQVSRLYMHKPGLLIIQLQTITDRDAAADLRGEEVYIAAADAAPLAADEFFYHDVIGMQAVTDSGEDIGEVRDILETGAGEIVVITRRGRPDALVPMVRDFIVAIDVGERRLVIRPIAGLLD</sequence>
<organism>
    <name type="scientific">Chloroflexus aurantiacus (strain ATCC 29366 / DSM 635 / J-10-fl)</name>
    <dbReference type="NCBI Taxonomy" id="324602"/>
    <lineage>
        <taxon>Bacteria</taxon>
        <taxon>Bacillati</taxon>
        <taxon>Chloroflexota</taxon>
        <taxon>Chloroflexia</taxon>
        <taxon>Chloroflexales</taxon>
        <taxon>Chloroflexineae</taxon>
        <taxon>Chloroflexaceae</taxon>
        <taxon>Chloroflexus</taxon>
    </lineage>
</organism>
<feature type="chain" id="PRO_0000351745" description="Ribosome maturation factor RimM">
    <location>
        <begin position="1"/>
        <end position="174"/>
    </location>
</feature>
<feature type="domain" description="PRC barrel" evidence="1">
    <location>
        <begin position="99"/>
        <end position="172"/>
    </location>
</feature>
<comment type="function">
    <text evidence="1">An accessory protein needed during the final step in the assembly of 30S ribosomal subunit, possibly for assembly of the head region. Essential for efficient processing of 16S rRNA. May be needed both before and after RbfA during the maturation of 16S rRNA. It has affinity for free ribosomal 30S subunits but not for 70S ribosomes.</text>
</comment>
<comment type="subunit">
    <text evidence="1">Binds ribosomal protein uS19.</text>
</comment>
<comment type="subcellular location">
    <subcellularLocation>
        <location evidence="1">Cytoplasm</location>
    </subcellularLocation>
</comment>
<comment type="domain">
    <text evidence="1">The PRC barrel domain binds ribosomal protein uS19.</text>
</comment>
<comment type="similarity">
    <text evidence="1">Belongs to the RimM family.</text>
</comment>
<comment type="sequence caution" evidence="2">
    <conflict type="erroneous initiation">
        <sequence resource="EMBL-CDS" id="ABY35267"/>
    </conflict>
</comment>
<evidence type="ECO:0000255" key="1">
    <source>
        <dbReference type="HAMAP-Rule" id="MF_00014"/>
    </source>
</evidence>
<evidence type="ECO:0000305" key="2"/>
<reference key="1">
    <citation type="journal article" date="2011" name="BMC Genomics">
        <title>Complete genome sequence of the filamentous anoxygenic phototrophic bacterium Chloroflexus aurantiacus.</title>
        <authorList>
            <person name="Tang K.H."/>
            <person name="Barry K."/>
            <person name="Chertkov O."/>
            <person name="Dalin E."/>
            <person name="Han C.S."/>
            <person name="Hauser L.J."/>
            <person name="Honchak B.M."/>
            <person name="Karbach L.E."/>
            <person name="Land M.L."/>
            <person name="Lapidus A."/>
            <person name="Larimer F.W."/>
            <person name="Mikhailova N."/>
            <person name="Pitluck S."/>
            <person name="Pierson B.K."/>
            <person name="Blankenship R.E."/>
        </authorList>
    </citation>
    <scope>NUCLEOTIDE SEQUENCE [LARGE SCALE GENOMIC DNA]</scope>
    <source>
        <strain>ATCC 29366 / DSM 635 / J-10-fl</strain>
    </source>
</reference>
<dbReference type="EMBL" id="CP000909">
    <property type="protein sequence ID" value="ABY35267.1"/>
    <property type="status" value="ALT_INIT"/>
    <property type="molecule type" value="Genomic_DNA"/>
</dbReference>
<dbReference type="RefSeq" id="WP_012257921.1">
    <property type="nucleotide sequence ID" value="NC_010175.1"/>
</dbReference>
<dbReference type="RefSeq" id="YP_001635656.1">
    <property type="nucleotide sequence ID" value="NC_010175.1"/>
</dbReference>
<dbReference type="SMR" id="A9WEK5"/>
<dbReference type="FunCoup" id="A9WEK5">
    <property type="interactions" value="345"/>
</dbReference>
<dbReference type="STRING" id="324602.Caur_2055"/>
<dbReference type="EnsemblBacteria" id="ABY35267">
    <property type="protein sequence ID" value="ABY35267"/>
    <property type="gene ID" value="Caur_2055"/>
</dbReference>
<dbReference type="KEGG" id="cau:Caur_2055"/>
<dbReference type="PATRIC" id="fig|324602.8.peg.2333"/>
<dbReference type="eggNOG" id="COG0806">
    <property type="taxonomic scope" value="Bacteria"/>
</dbReference>
<dbReference type="HOGENOM" id="CLU_077636_3_2_0"/>
<dbReference type="InParanoid" id="A9WEK5"/>
<dbReference type="Proteomes" id="UP000002008">
    <property type="component" value="Chromosome"/>
</dbReference>
<dbReference type="GO" id="GO:0005829">
    <property type="term" value="C:cytosol"/>
    <property type="evidence" value="ECO:0000318"/>
    <property type="project" value="GO_Central"/>
</dbReference>
<dbReference type="GO" id="GO:0005840">
    <property type="term" value="C:ribosome"/>
    <property type="evidence" value="ECO:0007669"/>
    <property type="project" value="InterPro"/>
</dbReference>
<dbReference type="GO" id="GO:0043022">
    <property type="term" value="F:ribosome binding"/>
    <property type="evidence" value="ECO:0007669"/>
    <property type="project" value="InterPro"/>
</dbReference>
<dbReference type="GO" id="GO:0030490">
    <property type="term" value="P:maturation of SSU-rRNA"/>
    <property type="evidence" value="ECO:0000318"/>
    <property type="project" value="GO_Central"/>
</dbReference>
<dbReference type="Gene3D" id="2.30.30.240">
    <property type="entry name" value="PRC-barrel domain"/>
    <property type="match status" value="1"/>
</dbReference>
<dbReference type="Gene3D" id="2.40.30.60">
    <property type="entry name" value="RimM"/>
    <property type="match status" value="1"/>
</dbReference>
<dbReference type="HAMAP" id="MF_00014">
    <property type="entry name" value="Ribosome_mat_RimM"/>
    <property type="match status" value="1"/>
</dbReference>
<dbReference type="InterPro" id="IPR027275">
    <property type="entry name" value="PRC-brl_dom"/>
</dbReference>
<dbReference type="InterPro" id="IPR011033">
    <property type="entry name" value="PRC_barrel-like_sf"/>
</dbReference>
<dbReference type="InterPro" id="IPR011961">
    <property type="entry name" value="RimM"/>
</dbReference>
<dbReference type="InterPro" id="IPR002676">
    <property type="entry name" value="RimM_N"/>
</dbReference>
<dbReference type="InterPro" id="IPR036976">
    <property type="entry name" value="RimM_N_sf"/>
</dbReference>
<dbReference type="InterPro" id="IPR009000">
    <property type="entry name" value="Transl_B-barrel_sf"/>
</dbReference>
<dbReference type="NCBIfam" id="TIGR02273">
    <property type="entry name" value="16S_RimM"/>
    <property type="match status" value="1"/>
</dbReference>
<dbReference type="PANTHER" id="PTHR33692">
    <property type="entry name" value="RIBOSOME MATURATION FACTOR RIMM"/>
    <property type="match status" value="1"/>
</dbReference>
<dbReference type="PANTHER" id="PTHR33692:SF1">
    <property type="entry name" value="RIBOSOME MATURATION FACTOR RIMM"/>
    <property type="match status" value="1"/>
</dbReference>
<dbReference type="Pfam" id="PF05239">
    <property type="entry name" value="PRC"/>
    <property type="match status" value="1"/>
</dbReference>
<dbReference type="Pfam" id="PF01782">
    <property type="entry name" value="RimM"/>
    <property type="match status" value="1"/>
</dbReference>
<dbReference type="SUPFAM" id="SSF50346">
    <property type="entry name" value="PRC-barrel domain"/>
    <property type="match status" value="1"/>
</dbReference>
<dbReference type="SUPFAM" id="SSF50447">
    <property type="entry name" value="Translation proteins"/>
    <property type="match status" value="1"/>
</dbReference>
<accession>A9WEK5</accession>
<keyword id="KW-0143">Chaperone</keyword>
<keyword id="KW-0963">Cytoplasm</keyword>
<keyword id="KW-1185">Reference proteome</keyword>
<keyword id="KW-0690">Ribosome biogenesis</keyword>
<keyword id="KW-0698">rRNA processing</keyword>